<name>DCUP_ERWT9</name>
<organism>
    <name type="scientific">Erwinia tasmaniensis (strain DSM 17950 / CFBP 7177 / CIP 109463 / NCPPB 4357 / Et1/99)</name>
    <dbReference type="NCBI Taxonomy" id="465817"/>
    <lineage>
        <taxon>Bacteria</taxon>
        <taxon>Pseudomonadati</taxon>
        <taxon>Pseudomonadota</taxon>
        <taxon>Gammaproteobacteria</taxon>
        <taxon>Enterobacterales</taxon>
        <taxon>Erwiniaceae</taxon>
        <taxon>Erwinia</taxon>
    </lineage>
</organism>
<dbReference type="EC" id="4.1.1.37" evidence="1"/>
<dbReference type="EMBL" id="CU468135">
    <property type="protein sequence ID" value="CAO95220.1"/>
    <property type="molecule type" value="Genomic_DNA"/>
</dbReference>
<dbReference type="RefSeq" id="WP_012439941.1">
    <property type="nucleotide sequence ID" value="NC_010694.1"/>
</dbReference>
<dbReference type="SMR" id="B2VG77"/>
<dbReference type="STRING" id="465817.ETA_01740"/>
<dbReference type="KEGG" id="eta:ETA_01740"/>
<dbReference type="eggNOG" id="COG0407">
    <property type="taxonomic scope" value="Bacteria"/>
</dbReference>
<dbReference type="HOGENOM" id="CLU_040933_0_0_6"/>
<dbReference type="OrthoDB" id="9806656at2"/>
<dbReference type="UniPathway" id="UPA00251">
    <property type="reaction ID" value="UER00321"/>
</dbReference>
<dbReference type="Proteomes" id="UP000001726">
    <property type="component" value="Chromosome"/>
</dbReference>
<dbReference type="GO" id="GO:0005829">
    <property type="term" value="C:cytosol"/>
    <property type="evidence" value="ECO:0007669"/>
    <property type="project" value="TreeGrafter"/>
</dbReference>
<dbReference type="GO" id="GO:0004853">
    <property type="term" value="F:uroporphyrinogen decarboxylase activity"/>
    <property type="evidence" value="ECO:0007669"/>
    <property type="project" value="UniProtKB-UniRule"/>
</dbReference>
<dbReference type="GO" id="GO:0019353">
    <property type="term" value="P:protoporphyrinogen IX biosynthetic process from glutamate"/>
    <property type="evidence" value="ECO:0007669"/>
    <property type="project" value="TreeGrafter"/>
</dbReference>
<dbReference type="CDD" id="cd00717">
    <property type="entry name" value="URO-D"/>
    <property type="match status" value="1"/>
</dbReference>
<dbReference type="FunFam" id="3.20.20.210:FF:000001">
    <property type="entry name" value="Uroporphyrinogen decarboxylase"/>
    <property type="match status" value="1"/>
</dbReference>
<dbReference type="Gene3D" id="3.20.20.210">
    <property type="match status" value="1"/>
</dbReference>
<dbReference type="HAMAP" id="MF_00218">
    <property type="entry name" value="URO_D"/>
    <property type="match status" value="1"/>
</dbReference>
<dbReference type="InterPro" id="IPR038071">
    <property type="entry name" value="UROD/MetE-like_sf"/>
</dbReference>
<dbReference type="InterPro" id="IPR006361">
    <property type="entry name" value="Uroporphyrinogen_deCO2ase_HemE"/>
</dbReference>
<dbReference type="InterPro" id="IPR000257">
    <property type="entry name" value="Uroporphyrinogen_deCOase"/>
</dbReference>
<dbReference type="NCBIfam" id="TIGR01464">
    <property type="entry name" value="hemE"/>
    <property type="match status" value="1"/>
</dbReference>
<dbReference type="PANTHER" id="PTHR21091">
    <property type="entry name" value="METHYLTETRAHYDROFOLATE:HOMOCYSTEINE METHYLTRANSFERASE RELATED"/>
    <property type="match status" value="1"/>
</dbReference>
<dbReference type="PANTHER" id="PTHR21091:SF169">
    <property type="entry name" value="UROPORPHYRINOGEN DECARBOXYLASE"/>
    <property type="match status" value="1"/>
</dbReference>
<dbReference type="Pfam" id="PF01208">
    <property type="entry name" value="URO-D"/>
    <property type="match status" value="1"/>
</dbReference>
<dbReference type="SUPFAM" id="SSF51726">
    <property type="entry name" value="UROD/MetE-like"/>
    <property type="match status" value="1"/>
</dbReference>
<dbReference type="PROSITE" id="PS00906">
    <property type="entry name" value="UROD_1"/>
    <property type="match status" value="1"/>
</dbReference>
<dbReference type="PROSITE" id="PS00907">
    <property type="entry name" value="UROD_2"/>
    <property type="match status" value="1"/>
</dbReference>
<reference key="1">
    <citation type="journal article" date="2008" name="Environ. Microbiol.">
        <title>The genome of Erwinia tasmaniensis strain Et1/99, a non-pathogenic bacterium in the genus Erwinia.</title>
        <authorList>
            <person name="Kube M."/>
            <person name="Migdoll A.M."/>
            <person name="Mueller I."/>
            <person name="Kuhl H."/>
            <person name="Beck A."/>
            <person name="Reinhardt R."/>
            <person name="Geider K."/>
        </authorList>
    </citation>
    <scope>NUCLEOTIDE SEQUENCE [LARGE SCALE GENOMIC DNA]</scope>
    <source>
        <strain>DSM 17950 / CFBP 7177 / CIP 109463 / NCPPB 4357 / Et1/99</strain>
    </source>
</reference>
<evidence type="ECO:0000255" key="1">
    <source>
        <dbReference type="HAMAP-Rule" id="MF_00218"/>
    </source>
</evidence>
<comment type="function">
    <text evidence="1">Catalyzes the decarboxylation of four acetate groups of uroporphyrinogen-III to yield coproporphyrinogen-III.</text>
</comment>
<comment type="catalytic activity">
    <reaction evidence="1">
        <text>uroporphyrinogen III + 4 H(+) = coproporphyrinogen III + 4 CO2</text>
        <dbReference type="Rhea" id="RHEA:19865"/>
        <dbReference type="ChEBI" id="CHEBI:15378"/>
        <dbReference type="ChEBI" id="CHEBI:16526"/>
        <dbReference type="ChEBI" id="CHEBI:57308"/>
        <dbReference type="ChEBI" id="CHEBI:57309"/>
        <dbReference type="EC" id="4.1.1.37"/>
    </reaction>
</comment>
<comment type="pathway">
    <text evidence="1">Porphyrin-containing compound metabolism; protoporphyrin-IX biosynthesis; coproporphyrinogen-III from 5-aminolevulinate: step 4/4.</text>
</comment>
<comment type="subunit">
    <text evidence="1">Homodimer.</text>
</comment>
<comment type="subcellular location">
    <subcellularLocation>
        <location evidence="1">Cytoplasm</location>
    </subcellularLocation>
</comment>
<comment type="similarity">
    <text evidence="1">Belongs to the uroporphyrinogen decarboxylase family.</text>
</comment>
<sequence length="355" mass="39265">MSELKNDRYLRALLRQPVDVTPVWMMRQAGRYLPEYKATRAVAGDFMSLCKNAELACEVTLQPLRRYALDAAILFSDILTIPDAMGLGLYFETGEGPRFSSPVTCRADVEKLPIPDPEQELGYVMNAVRTIRKNLNGEVPLIGFSGSPWTLATYMVEGGSSKAFTKLKKMMYAEPQTLHLMLDKLADSVTLYLNAQIRAGAQSVMIFDTWGGVLTGRDYLEFSLNYMHKIVDGLLRENDGRRVPVTLFTKGGGQWLEAMAATGCDALGLDWTTDLADARRRVGDRVALQGNMDPSMLYASPARIEQEVAGILEGYGHGNGHVFNLGHGIHQDVPPEHAGAFVEAVHRLSRPYHLG</sequence>
<gene>
    <name evidence="1" type="primary">hemE</name>
    <name type="ordered locus">ETA_01740</name>
</gene>
<feature type="chain" id="PRO_1000099992" description="Uroporphyrinogen decarboxylase">
    <location>
        <begin position="1"/>
        <end position="355"/>
    </location>
</feature>
<feature type="binding site" evidence="1">
    <location>
        <begin position="27"/>
        <end position="31"/>
    </location>
    <ligand>
        <name>substrate</name>
    </ligand>
</feature>
<feature type="binding site" evidence="1">
    <location>
        <position position="77"/>
    </location>
    <ligand>
        <name>substrate</name>
    </ligand>
</feature>
<feature type="binding site" evidence="1">
    <location>
        <position position="154"/>
    </location>
    <ligand>
        <name>substrate</name>
    </ligand>
</feature>
<feature type="binding site" evidence="1">
    <location>
        <position position="209"/>
    </location>
    <ligand>
        <name>substrate</name>
    </ligand>
</feature>
<feature type="binding site" evidence="1">
    <location>
        <position position="327"/>
    </location>
    <ligand>
        <name>substrate</name>
    </ligand>
</feature>
<feature type="site" description="Transition state stabilizer" evidence="1">
    <location>
        <position position="77"/>
    </location>
</feature>
<keyword id="KW-0963">Cytoplasm</keyword>
<keyword id="KW-0210">Decarboxylase</keyword>
<keyword id="KW-0456">Lyase</keyword>
<keyword id="KW-0627">Porphyrin biosynthesis</keyword>
<keyword id="KW-1185">Reference proteome</keyword>
<accession>B2VG77</accession>
<proteinExistence type="inferred from homology"/>
<protein>
    <recommendedName>
        <fullName evidence="1">Uroporphyrinogen decarboxylase</fullName>
        <shortName evidence="1">UPD</shortName>
        <shortName evidence="1">URO-D</shortName>
        <ecNumber evidence="1">4.1.1.37</ecNumber>
    </recommendedName>
</protein>